<dbReference type="EC" id="2.5.1.3" evidence="1"/>
<dbReference type="EMBL" id="AE016830">
    <property type="protein sequence ID" value="AAO82473.1"/>
    <property type="molecule type" value="Genomic_DNA"/>
</dbReference>
<dbReference type="RefSeq" id="NP_816403.1">
    <property type="nucleotide sequence ID" value="NC_004668.1"/>
</dbReference>
<dbReference type="RefSeq" id="WP_010714091.1">
    <property type="nucleotide sequence ID" value="NZ_KE136528.1"/>
</dbReference>
<dbReference type="SMR" id="Q830K5"/>
<dbReference type="STRING" id="226185.EF_2776"/>
<dbReference type="EnsemblBacteria" id="AAO82473">
    <property type="protein sequence ID" value="AAO82473"/>
    <property type="gene ID" value="EF_2776"/>
</dbReference>
<dbReference type="KEGG" id="efa:EF2776"/>
<dbReference type="PATRIC" id="fig|226185.45.peg.794"/>
<dbReference type="eggNOG" id="COG0352">
    <property type="taxonomic scope" value="Bacteria"/>
</dbReference>
<dbReference type="HOGENOM" id="CLU_018272_3_2_9"/>
<dbReference type="UniPathway" id="UPA00060">
    <property type="reaction ID" value="UER00141"/>
</dbReference>
<dbReference type="Proteomes" id="UP000001415">
    <property type="component" value="Chromosome"/>
</dbReference>
<dbReference type="GO" id="GO:0005737">
    <property type="term" value="C:cytoplasm"/>
    <property type="evidence" value="ECO:0007669"/>
    <property type="project" value="TreeGrafter"/>
</dbReference>
<dbReference type="GO" id="GO:0000287">
    <property type="term" value="F:magnesium ion binding"/>
    <property type="evidence" value="ECO:0007669"/>
    <property type="project" value="UniProtKB-UniRule"/>
</dbReference>
<dbReference type="GO" id="GO:0004789">
    <property type="term" value="F:thiamine-phosphate diphosphorylase activity"/>
    <property type="evidence" value="ECO:0007669"/>
    <property type="project" value="UniProtKB-UniRule"/>
</dbReference>
<dbReference type="GO" id="GO:0009228">
    <property type="term" value="P:thiamine biosynthetic process"/>
    <property type="evidence" value="ECO:0007669"/>
    <property type="project" value="UniProtKB-KW"/>
</dbReference>
<dbReference type="GO" id="GO:0009229">
    <property type="term" value="P:thiamine diphosphate biosynthetic process"/>
    <property type="evidence" value="ECO:0007669"/>
    <property type="project" value="UniProtKB-UniRule"/>
</dbReference>
<dbReference type="CDD" id="cd00564">
    <property type="entry name" value="TMP_TenI"/>
    <property type="match status" value="1"/>
</dbReference>
<dbReference type="FunFam" id="3.20.20.70:FF:000096">
    <property type="entry name" value="Thiamine-phosphate synthase"/>
    <property type="match status" value="1"/>
</dbReference>
<dbReference type="Gene3D" id="3.20.20.70">
    <property type="entry name" value="Aldolase class I"/>
    <property type="match status" value="1"/>
</dbReference>
<dbReference type="HAMAP" id="MF_00097">
    <property type="entry name" value="TMP_synthase"/>
    <property type="match status" value="1"/>
</dbReference>
<dbReference type="InterPro" id="IPR013785">
    <property type="entry name" value="Aldolase_TIM"/>
</dbReference>
<dbReference type="InterPro" id="IPR036206">
    <property type="entry name" value="ThiamineP_synth_sf"/>
</dbReference>
<dbReference type="InterPro" id="IPR022998">
    <property type="entry name" value="ThiamineP_synth_TenI"/>
</dbReference>
<dbReference type="InterPro" id="IPR034291">
    <property type="entry name" value="TMP_synthase"/>
</dbReference>
<dbReference type="NCBIfam" id="TIGR00693">
    <property type="entry name" value="thiE"/>
    <property type="match status" value="1"/>
</dbReference>
<dbReference type="PANTHER" id="PTHR20857">
    <property type="entry name" value="THIAMINE-PHOSPHATE PYROPHOSPHORYLASE"/>
    <property type="match status" value="1"/>
</dbReference>
<dbReference type="PANTHER" id="PTHR20857:SF15">
    <property type="entry name" value="THIAMINE-PHOSPHATE SYNTHASE"/>
    <property type="match status" value="1"/>
</dbReference>
<dbReference type="Pfam" id="PF02581">
    <property type="entry name" value="TMP-TENI"/>
    <property type="match status" value="1"/>
</dbReference>
<dbReference type="SUPFAM" id="SSF51391">
    <property type="entry name" value="Thiamin phosphate synthase"/>
    <property type="match status" value="1"/>
</dbReference>
<accession>Q830K5</accession>
<sequence length="211" mass="22909">MREKLKVYLVTGRYDFSDTEFLKRIETACRSGVTLVQLREKEVSTRRFYELAVKVKVVTDAYQIPLIINDRVDICLAVDAAGVHIGDDELPVALVRKLVGSTKIVGVSAKTVARGVEAENEGADYLGVGAIFPTTTKDSPLTSLQTLSEIAAAVTIPVVAIGGIKEENIEQLMGTGVAGVSLVSEIMLAEQITEKVQGLMRVTERMLEARK</sequence>
<comment type="function">
    <text evidence="1">Condenses 4-methyl-5-(beta-hydroxyethyl)thiazole monophosphate (THZ-P) and 2-methyl-4-amino-5-hydroxymethyl pyrimidine pyrophosphate (HMP-PP) to form thiamine monophosphate (TMP).</text>
</comment>
<comment type="catalytic activity">
    <reaction evidence="1">
        <text>2-[(2R,5Z)-2-carboxy-4-methylthiazol-5(2H)-ylidene]ethyl phosphate + 4-amino-2-methyl-5-(diphosphooxymethyl)pyrimidine + 2 H(+) = thiamine phosphate + CO2 + diphosphate</text>
        <dbReference type="Rhea" id="RHEA:47844"/>
        <dbReference type="ChEBI" id="CHEBI:15378"/>
        <dbReference type="ChEBI" id="CHEBI:16526"/>
        <dbReference type="ChEBI" id="CHEBI:33019"/>
        <dbReference type="ChEBI" id="CHEBI:37575"/>
        <dbReference type="ChEBI" id="CHEBI:57841"/>
        <dbReference type="ChEBI" id="CHEBI:62899"/>
        <dbReference type="EC" id="2.5.1.3"/>
    </reaction>
</comment>
<comment type="catalytic activity">
    <reaction evidence="1">
        <text>2-(2-carboxy-4-methylthiazol-5-yl)ethyl phosphate + 4-amino-2-methyl-5-(diphosphooxymethyl)pyrimidine + 2 H(+) = thiamine phosphate + CO2 + diphosphate</text>
        <dbReference type="Rhea" id="RHEA:47848"/>
        <dbReference type="ChEBI" id="CHEBI:15378"/>
        <dbReference type="ChEBI" id="CHEBI:16526"/>
        <dbReference type="ChEBI" id="CHEBI:33019"/>
        <dbReference type="ChEBI" id="CHEBI:37575"/>
        <dbReference type="ChEBI" id="CHEBI:57841"/>
        <dbReference type="ChEBI" id="CHEBI:62890"/>
        <dbReference type="EC" id="2.5.1.3"/>
    </reaction>
</comment>
<comment type="catalytic activity">
    <reaction evidence="1">
        <text>4-methyl-5-(2-phosphooxyethyl)-thiazole + 4-amino-2-methyl-5-(diphosphooxymethyl)pyrimidine + H(+) = thiamine phosphate + diphosphate</text>
        <dbReference type="Rhea" id="RHEA:22328"/>
        <dbReference type="ChEBI" id="CHEBI:15378"/>
        <dbReference type="ChEBI" id="CHEBI:33019"/>
        <dbReference type="ChEBI" id="CHEBI:37575"/>
        <dbReference type="ChEBI" id="CHEBI:57841"/>
        <dbReference type="ChEBI" id="CHEBI:58296"/>
        <dbReference type="EC" id="2.5.1.3"/>
    </reaction>
</comment>
<comment type="cofactor">
    <cofactor evidence="1">
        <name>Mg(2+)</name>
        <dbReference type="ChEBI" id="CHEBI:18420"/>
    </cofactor>
    <text evidence="1">Binds 1 Mg(2+) ion per subunit.</text>
</comment>
<comment type="pathway">
    <text evidence="1">Cofactor biosynthesis; thiamine diphosphate biosynthesis; thiamine phosphate from 4-amino-2-methyl-5-diphosphomethylpyrimidine and 4-methyl-5-(2-phosphoethyl)-thiazole: step 1/1.</text>
</comment>
<comment type="similarity">
    <text evidence="1">Belongs to the thiamine-phosphate synthase family.</text>
</comment>
<reference key="1">
    <citation type="journal article" date="2003" name="Science">
        <title>Role of mobile DNA in the evolution of vancomycin-resistant Enterococcus faecalis.</title>
        <authorList>
            <person name="Paulsen I.T."/>
            <person name="Banerjei L."/>
            <person name="Myers G.S.A."/>
            <person name="Nelson K.E."/>
            <person name="Seshadri R."/>
            <person name="Read T.D."/>
            <person name="Fouts D.E."/>
            <person name="Eisen J.A."/>
            <person name="Gill S.R."/>
            <person name="Heidelberg J.F."/>
            <person name="Tettelin H."/>
            <person name="Dodson R.J."/>
            <person name="Umayam L.A."/>
            <person name="Brinkac L.M."/>
            <person name="Beanan M.J."/>
            <person name="Daugherty S.C."/>
            <person name="DeBoy R.T."/>
            <person name="Durkin S.A."/>
            <person name="Kolonay J.F."/>
            <person name="Madupu R."/>
            <person name="Nelson W.C."/>
            <person name="Vamathevan J.J."/>
            <person name="Tran B."/>
            <person name="Upton J."/>
            <person name="Hansen T."/>
            <person name="Shetty J."/>
            <person name="Khouri H.M."/>
            <person name="Utterback T.R."/>
            <person name="Radune D."/>
            <person name="Ketchum K.A."/>
            <person name="Dougherty B.A."/>
            <person name="Fraser C.M."/>
        </authorList>
    </citation>
    <scope>NUCLEOTIDE SEQUENCE [LARGE SCALE GENOMIC DNA]</scope>
    <source>
        <strain>ATCC 700802 / V583</strain>
    </source>
</reference>
<name>THIE_ENTFA</name>
<proteinExistence type="inferred from homology"/>
<feature type="chain" id="PRO_0000157013" description="Thiamine-phosphate synthase">
    <location>
        <begin position="1"/>
        <end position="211"/>
    </location>
</feature>
<feature type="binding site" evidence="1">
    <location>
        <begin position="37"/>
        <end position="41"/>
    </location>
    <ligand>
        <name>4-amino-2-methyl-5-(diphosphooxymethyl)pyrimidine</name>
        <dbReference type="ChEBI" id="CHEBI:57841"/>
    </ligand>
</feature>
<feature type="binding site" evidence="1">
    <location>
        <position position="69"/>
    </location>
    <ligand>
        <name>4-amino-2-methyl-5-(diphosphooxymethyl)pyrimidine</name>
        <dbReference type="ChEBI" id="CHEBI:57841"/>
    </ligand>
</feature>
<feature type="binding site" evidence="1">
    <location>
        <position position="70"/>
    </location>
    <ligand>
        <name>Mg(2+)</name>
        <dbReference type="ChEBI" id="CHEBI:18420"/>
    </ligand>
</feature>
<feature type="binding site" evidence="1">
    <location>
        <position position="89"/>
    </location>
    <ligand>
        <name>Mg(2+)</name>
        <dbReference type="ChEBI" id="CHEBI:18420"/>
    </ligand>
</feature>
<feature type="binding site" evidence="1">
    <location>
        <position position="108"/>
    </location>
    <ligand>
        <name>4-amino-2-methyl-5-(diphosphooxymethyl)pyrimidine</name>
        <dbReference type="ChEBI" id="CHEBI:57841"/>
    </ligand>
</feature>
<feature type="binding site" evidence="1">
    <location>
        <begin position="134"/>
        <end position="136"/>
    </location>
    <ligand>
        <name>2-[(2R,5Z)-2-carboxy-4-methylthiazol-5(2H)-ylidene]ethyl phosphate</name>
        <dbReference type="ChEBI" id="CHEBI:62899"/>
    </ligand>
</feature>
<feature type="binding site" evidence="1">
    <location>
        <position position="137"/>
    </location>
    <ligand>
        <name>4-amino-2-methyl-5-(diphosphooxymethyl)pyrimidine</name>
        <dbReference type="ChEBI" id="CHEBI:57841"/>
    </ligand>
</feature>
<feature type="binding site" evidence="1">
    <location>
        <position position="163"/>
    </location>
    <ligand>
        <name>2-[(2R,5Z)-2-carboxy-4-methylthiazol-5(2H)-ylidene]ethyl phosphate</name>
        <dbReference type="ChEBI" id="CHEBI:62899"/>
    </ligand>
</feature>
<feature type="binding site" evidence="1">
    <location>
        <begin position="183"/>
        <end position="184"/>
    </location>
    <ligand>
        <name>2-[(2R,5Z)-2-carboxy-4-methylthiazol-5(2H)-ylidene]ethyl phosphate</name>
        <dbReference type="ChEBI" id="CHEBI:62899"/>
    </ligand>
</feature>
<keyword id="KW-0460">Magnesium</keyword>
<keyword id="KW-0479">Metal-binding</keyword>
<keyword id="KW-1185">Reference proteome</keyword>
<keyword id="KW-0784">Thiamine biosynthesis</keyword>
<keyword id="KW-0808">Transferase</keyword>
<evidence type="ECO:0000255" key="1">
    <source>
        <dbReference type="HAMAP-Rule" id="MF_00097"/>
    </source>
</evidence>
<gene>
    <name evidence="1" type="primary">thiE</name>
    <name type="ordered locus">EF_2776</name>
</gene>
<organism>
    <name type="scientific">Enterococcus faecalis (strain ATCC 700802 / V583)</name>
    <dbReference type="NCBI Taxonomy" id="226185"/>
    <lineage>
        <taxon>Bacteria</taxon>
        <taxon>Bacillati</taxon>
        <taxon>Bacillota</taxon>
        <taxon>Bacilli</taxon>
        <taxon>Lactobacillales</taxon>
        <taxon>Enterococcaceae</taxon>
        <taxon>Enterococcus</taxon>
    </lineage>
</organism>
<protein>
    <recommendedName>
        <fullName evidence="1">Thiamine-phosphate synthase</fullName>
        <shortName evidence="1">TP synthase</shortName>
        <shortName evidence="1">TPS</shortName>
        <ecNumber evidence="1">2.5.1.3</ecNumber>
    </recommendedName>
    <alternativeName>
        <fullName evidence="1">Thiamine-phosphate pyrophosphorylase</fullName>
        <shortName evidence="1">TMP pyrophosphorylase</shortName>
        <shortName evidence="1">TMP-PPase</shortName>
    </alternativeName>
</protein>